<gene>
    <name evidence="1" type="primary">rpiA</name>
    <name type="ordered locus">SPC_3124</name>
</gene>
<sequence length="219" mass="22895">MTQDELKKAVGWAALQYVQPGTIVGVGTGSTAAHFIDALGTMKGQIEGAVSSSDASTEKLKGLGIHVFDLNEVDSLGIYVDGADEINGHMQMIKGGGAALTREKIIASVAEKFICIADASKQVDILGKFPLPVEVIPMARSAVARQLVKLGGRPEYRQNVVTDNGNVILDVYGMEILDPIALENAINAIPGVVTVGLFANRGADVALIGTPDGVKTIVK</sequence>
<reference key="1">
    <citation type="journal article" date="2009" name="PLoS ONE">
        <title>Salmonella paratyphi C: genetic divergence from Salmonella choleraesuis and pathogenic convergence with Salmonella typhi.</title>
        <authorList>
            <person name="Liu W.-Q."/>
            <person name="Feng Y."/>
            <person name="Wang Y."/>
            <person name="Zou Q.-H."/>
            <person name="Chen F."/>
            <person name="Guo J.-T."/>
            <person name="Peng Y.-H."/>
            <person name="Jin Y."/>
            <person name="Li Y.-G."/>
            <person name="Hu S.-N."/>
            <person name="Johnston R.N."/>
            <person name="Liu G.-R."/>
            <person name="Liu S.-L."/>
        </authorList>
    </citation>
    <scope>NUCLEOTIDE SEQUENCE [LARGE SCALE GENOMIC DNA]</scope>
    <source>
        <strain>RKS4594</strain>
    </source>
</reference>
<proteinExistence type="inferred from homology"/>
<comment type="function">
    <text evidence="1">Catalyzes the reversible conversion of ribose-5-phosphate to ribulose 5-phosphate.</text>
</comment>
<comment type="catalytic activity">
    <reaction evidence="1">
        <text>aldehydo-D-ribose 5-phosphate = D-ribulose 5-phosphate</text>
        <dbReference type="Rhea" id="RHEA:14657"/>
        <dbReference type="ChEBI" id="CHEBI:58121"/>
        <dbReference type="ChEBI" id="CHEBI:58273"/>
        <dbReference type="EC" id="5.3.1.6"/>
    </reaction>
</comment>
<comment type="pathway">
    <text evidence="1">Carbohydrate degradation; pentose phosphate pathway; D-ribose 5-phosphate from D-ribulose 5-phosphate (non-oxidative stage): step 1/1.</text>
</comment>
<comment type="subunit">
    <text evidence="1">Homodimer.</text>
</comment>
<comment type="similarity">
    <text evidence="1">Belongs to the ribose 5-phosphate isomerase family.</text>
</comment>
<keyword id="KW-0413">Isomerase</keyword>
<evidence type="ECO:0000255" key="1">
    <source>
        <dbReference type="HAMAP-Rule" id="MF_00170"/>
    </source>
</evidence>
<protein>
    <recommendedName>
        <fullName evidence="1">Ribose-5-phosphate isomerase A</fullName>
        <ecNumber evidence="1">5.3.1.6</ecNumber>
    </recommendedName>
    <alternativeName>
        <fullName evidence="1">Phosphoriboisomerase A</fullName>
        <shortName evidence="1">PRI</shortName>
    </alternativeName>
</protein>
<name>RPIA_SALPC</name>
<accession>C0PY37</accession>
<dbReference type="EC" id="5.3.1.6" evidence="1"/>
<dbReference type="EMBL" id="CP000857">
    <property type="protein sequence ID" value="ACN47211.1"/>
    <property type="molecule type" value="Genomic_DNA"/>
</dbReference>
<dbReference type="RefSeq" id="WP_000189741.1">
    <property type="nucleotide sequence ID" value="NC_012125.1"/>
</dbReference>
<dbReference type="SMR" id="C0PY37"/>
<dbReference type="KEGG" id="sei:SPC_3124"/>
<dbReference type="HOGENOM" id="CLU_056590_1_1_6"/>
<dbReference type="UniPathway" id="UPA00115">
    <property type="reaction ID" value="UER00412"/>
</dbReference>
<dbReference type="Proteomes" id="UP000001599">
    <property type="component" value="Chromosome"/>
</dbReference>
<dbReference type="GO" id="GO:0005829">
    <property type="term" value="C:cytosol"/>
    <property type="evidence" value="ECO:0007669"/>
    <property type="project" value="TreeGrafter"/>
</dbReference>
<dbReference type="GO" id="GO:0004751">
    <property type="term" value="F:ribose-5-phosphate isomerase activity"/>
    <property type="evidence" value="ECO:0007669"/>
    <property type="project" value="UniProtKB-UniRule"/>
</dbReference>
<dbReference type="GO" id="GO:0006014">
    <property type="term" value="P:D-ribose metabolic process"/>
    <property type="evidence" value="ECO:0007669"/>
    <property type="project" value="TreeGrafter"/>
</dbReference>
<dbReference type="GO" id="GO:0009052">
    <property type="term" value="P:pentose-phosphate shunt, non-oxidative branch"/>
    <property type="evidence" value="ECO:0007669"/>
    <property type="project" value="UniProtKB-UniRule"/>
</dbReference>
<dbReference type="CDD" id="cd01398">
    <property type="entry name" value="RPI_A"/>
    <property type="match status" value="1"/>
</dbReference>
<dbReference type="FunFam" id="3.30.70.260:FF:000004">
    <property type="entry name" value="Ribose-5-phosphate isomerase A"/>
    <property type="match status" value="1"/>
</dbReference>
<dbReference type="FunFam" id="3.40.50.1360:FF:000001">
    <property type="entry name" value="Ribose-5-phosphate isomerase A"/>
    <property type="match status" value="1"/>
</dbReference>
<dbReference type="Gene3D" id="3.30.70.260">
    <property type="match status" value="1"/>
</dbReference>
<dbReference type="Gene3D" id="3.40.50.1360">
    <property type="match status" value="1"/>
</dbReference>
<dbReference type="HAMAP" id="MF_00170">
    <property type="entry name" value="Rib_5P_isom_A"/>
    <property type="match status" value="1"/>
</dbReference>
<dbReference type="InterPro" id="IPR037171">
    <property type="entry name" value="NagB/RpiA_transferase-like"/>
</dbReference>
<dbReference type="InterPro" id="IPR020672">
    <property type="entry name" value="Ribose5P_isomerase_typA_subgr"/>
</dbReference>
<dbReference type="InterPro" id="IPR004788">
    <property type="entry name" value="Ribose5P_isomerase_type_A"/>
</dbReference>
<dbReference type="NCBIfam" id="NF001924">
    <property type="entry name" value="PRK00702.1"/>
    <property type="match status" value="1"/>
</dbReference>
<dbReference type="NCBIfam" id="TIGR00021">
    <property type="entry name" value="rpiA"/>
    <property type="match status" value="1"/>
</dbReference>
<dbReference type="PANTHER" id="PTHR11934">
    <property type="entry name" value="RIBOSE-5-PHOSPHATE ISOMERASE"/>
    <property type="match status" value="1"/>
</dbReference>
<dbReference type="PANTHER" id="PTHR11934:SF0">
    <property type="entry name" value="RIBOSE-5-PHOSPHATE ISOMERASE"/>
    <property type="match status" value="1"/>
</dbReference>
<dbReference type="Pfam" id="PF06026">
    <property type="entry name" value="Rib_5-P_isom_A"/>
    <property type="match status" value="1"/>
</dbReference>
<dbReference type="SUPFAM" id="SSF75445">
    <property type="entry name" value="D-ribose-5-phosphate isomerase (RpiA), lid domain"/>
    <property type="match status" value="1"/>
</dbReference>
<dbReference type="SUPFAM" id="SSF100950">
    <property type="entry name" value="NagB/RpiA/CoA transferase-like"/>
    <property type="match status" value="1"/>
</dbReference>
<organism>
    <name type="scientific">Salmonella paratyphi C (strain RKS4594)</name>
    <dbReference type="NCBI Taxonomy" id="476213"/>
    <lineage>
        <taxon>Bacteria</taxon>
        <taxon>Pseudomonadati</taxon>
        <taxon>Pseudomonadota</taxon>
        <taxon>Gammaproteobacteria</taxon>
        <taxon>Enterobacterales</taxon>
        <taxon>Enterobacteriaceae</taxon>
        <taxon>Salmonella</taxon>
    </lineage>
</organism>
<feature type="chain" id="PRO_1000194719" description="Ribose-5-phosphate isomerase A">
    <location>
        <begin position="1"/>
        <end position="219"/>
    </location>
</feature>
<feature type="active site" description="Proton acceptor" evidence="1">
    <location>
        <position position="103"/>
    </location>
</feature>
<feature type="binding site" evidence="1">
    <location>
        <begin position="28"/>
        <end position="31"/>
    </location>
    <ligand>
        <name>substrate</name>
    </ligand>
</feature>
<feature type="binding site" evidence="1">
    <location>
        <begin position="81"/>
        <end position="84"/>
    </location>
    <ligand>
        <name>substrate</name>
    </ligand>
</feature>
<feature type="binding site" evidence="1">
    <location>
        <begin position="94"/>
        <end position="97"/>
    </location>
    <ligand>
        <name>substrate</name>
    </ligand>
</feature>
<feature type="binding site" evidence="1">
    <location>
        <position position="121"/>
    </location>
    <ligand>
        <name>substrate</name>
    </ligand>
</feature>